<feature type="chain" id="PRO_1000016207" description="Aspartyl/glutamyl-tRNA(Asn/Gln) amidotransferase subunit C">
    <location>
        <begin position="1"/>
        <end position="95"/>
    </location>
</feature>
<feature type="region of interest" description="Disordered" evidence="2">
    <location>
        <begin position="74"/>
        <end position="95"/>
    </location>
</feature>
<protein>
    <recommendedName>
        <fullName evidence="1">Aspartyl/glutamyl-tRNA(Asn/Gln) amidotransferase subunit C</fullName>
        <shortName evidence="1">Asp/Glu-ADT subunit C</shortName>
        <ecNumber evidence="1">6.3.5.-</ecNumber>
    </recommendedName>
</protein>
<accession>Q2S325</accession>
<comment type="function">
    <text evidence="1">Allows the formation of correctly charged Asn-tRNA(Asn) or Gln-tRNA(Gln) through the transamidation of misacylated Asp-tRNA(Asn) or Glu-tRNA(Gln) in organisms which lack either or both of asparaginyl-tRNA or glutaminyl-tRNA synthetases. The reaction takes place in the presence of glutamine and ATP through an activated phospho-Asp-tRNA(Asn) or phospho-Glu-tRNA(Gln).</text>
</comment>
<comment type="catalytic activity">
    <reaction evidence="1">
        <text>L-glutamyl-tRNA(Gln) + L-glutamine + ATP + H2O = L-glutaminyl-tRNA(Gln) + L-glutamate + ADP + phosphate + H(+)</text>
        <dbReference type="Rhea" id="RHEA:17521"/>
        <dbReference type="Rhea" id="RHEA-COMP:9681"/>
        <dbReference type="Rhea" id="RHEA-COMP:9684"/>
        <dbReference type="ChEBI" id="CHEBI:15377"/>
        <dbReference type="ChEBI" id="CHEBI:15378"/>
        <dbReference type="ChEBI" id="CHEBI:29985"/>
        <dbReference type="ChEBI" id="CHEBI:30616"/>
        <dbReference type="ChEBI" id="CHEBI:43474"/>
        <dbReference type="ChEBI" id="CHEBI:58359"/>
        <dbReference type="ChEBI" id="CHEBI:78520"/>
        <dbReference type="ChEBI" id="CHEBI:78521"/>
        <dbReference type="ChEBI" id="CHEBI:456216"/>
    </reaction>
</comment>
<comment type="catalytic activity">
    <reaction evidence="1">
        <text>L-aspartyl-tRNA(Asn) + L-glutamine + ATP + H2O = L-asparaginyl-tRNA(Asn) + L-glutamate + ADP + phosphate + 2 H(+)</text>
        <dbReference type="Rhea" id="RHEA:14513"/>
        <dbReference type="Rhea" id="RHEA-COMP:9674"/>
        <dbReference type="Rhea" id="RHEA-COMP:9677"/>
        <dbReference type="ChEBI" id="CHEBI:15377"/>
        <dbReference type="ChEBI" id="CHEBI:15378"/>
        <dbReference type="ChEBI" id="CHEBI:29985"/>
        <dbReference type="ChEBI" id="CHEBI:30616"/>
        <dbReference type="ChEBI" id="CHEBI:43474"/>
        <dbReference type="ChEBI" id="CHEBI:58359"/>
        <dbReference type="ChEBI" id="CHEBI:78515"/>
        <dbReference type="ChEBI" id="CHEBI:78516"/>
        <dbReference type="ChEBI" id="CHEBI:456216"/>
    </reaction>
</comment>
<comment type="subunit">
    <text evidence="1">Heterotrimer of A, B and C subunits.</text>
</comment>
<comment type="similarity">
    <text evidence="1">Belongs to the GatC family.</text>
</comment>
<proteinExistence type="inferred from homology"/>
<evidence type="ECO:0000255" key="1">
    <source>
        <dbReference type="HAMAP-Rule" id="MF_00122"/>
    </source>
</evidence>
<evidence type="ECO:0000256" key="2">
    <source>
        <dbReference type="SAM" id="MobiDB-lite"/>
    </source>
</evidence>
<organism>
    <name type="scientific">Salinibacter ruber (strain DSM 13855 / M31)</name>
    <dbReference type="NCBI Taxonomy" id="309807"/>
    <lineage>
        <taxon>Bacteria</taxon>
        <taxon>Pseudomonadati</taxon>
        <taxon>Rhodothermota</taxon>
        <taxon>Rhodothermia</taxon>
        <taxon>Rhodothermales</taxon>
        <taxon>Salinibacteraceae</taxon>
        <taxon>Salinibacter</taxon>
    </lineage>
</organism>
<reference key="1">
    <citation type="journal article" date="2005" name="Proc. Natl. Acad. Sci. U.S.A.">
        <title>The genome of Salinibacter ruber: convergence and gene exchange among hyperhalophilic bacteria and archaea.</title>
        <authorList>
            <person name="Mongodin E.F."/>
            <person name="Nelson K.E."/>
            <person name="Daugherty S."/>
            <person name="DeBoy R.T."/>
            <person name="Wister J."/>
            <person name="Khouri H."/>
            <person name="Weidman J."/>
            <person name="Walsh D.A."/>
            <person name="Papke R.T."/>
            <person name="Sanchez Perez G."/>
            <person name="Sharma A.K."/>
            <person name="Nesbo C.L."/>
            <person name="MacLeod D."/>
            <person name="Bapteste E."/>
            <person name="Doolittle W.F."/>
            <person name="Charlebois R.L."/>
            <person name="Legault B."/>
            <person name="Rodriguez-Valera F."/>
        </authorList>
    </citation>
    <scope>NUCLEOTIDE SEQUENCE [LARGE SCALE GENOMIC DNA]</scope>
    <source>
        <strain>DSM 13855 / CECT 5946 / M31</strain>
    </source>
</reference>
<name>GATC_SALRD</name>
<dbReference type="EC" id="6.3.5.-" evidence="1"/>
<dbReference type="EMBL" id="CP000159">
    <property type="protein sequence ID" value="ABC45560.1"/>
    <property type="molecule type" value="Genomic_DNA"/>
</dbReference>
<dbReference type="RefSeq" id="WP_011404034.1">
    <property type="nucleotide sequence ID" value="NC_007677.1"/>
</dbReference>
<dbReference type="RefSeq" id="YP_445406.1">
    <property type="nucleotide sequence ID" value="NC_007677.1"/>
</dbReference>
<dbReference type="SMR" id="Q2S325"/>
<dbReference type="STRING" id="309807.SRU_1282"/>
<dbReference type="EnsemblBacteria" id="ABC45560">
    <property type="protein sequence ID" value="ABC45560"/>
    <property type="gene ID" value="SRU_1282"/>
</dbReference>
<dbReference type="GeneID" id="83728196"/>
<dbReference type="KEGG" id="sru:SRU_1282"/>
<dbReference type="PATRIC" id="fig|309807.25.peg.1332"/>
<dbReference type="eggNOG" id="COG0721">
    <property type="taxonomic scope" value="Bacteria"/>
</dbReference>
<dbReference type="HOGENOM" id="CLU_105899_1_2_10"/>
<dbReference type="OrthoDB" id="9813938at2"/>
<dbReference type="Proteomes" id="UP000008674">
    <property type="component" value="Chromosome"/>
</dbReference>
<dbReference type="GO" id="GO:0050566">
    <property type="term" value="F:asparaginyl-tRNA synthase (glutamine-hydrolyzing) activity"/>
    <property type="evidence" value="ECO:0007669"/>
    <property type="project" value="RHEA"/>
</dbReference>
<dbReference type="GO" id="GO:0005524">
    <property type="term" value="F:ATP binding"/>
    <property type="evidence" value="ECO:0007669"/>
    <property type="project" value="UniProtKB-KW"/>
</dbReference>
<dbReference type="GO" id="GO:0050567">
    <property type="term" value="F:glutaminyl-tRNA synthase (glutamine-hydrolyzing) activity"/>
    <property type="evidence" value="ECO:0007669"/>
    <property type="project" value="UniProtKB-UniRule"/>
</dbReference>
<dbReference type="GO" id="GO:0070681">
    <property type="term" value="P:glutaminyl-tRNAGln biosynthesis via transamidation"/>
    <property type="evidence" value="ECO:0007669"/>
    <property type="project" value="TreeGrafter"/>
</dbReference>
<dbReference type="GO" id="GO:0006450">
    <property type="term" value="P:regulation of translational fidelity"/>
    <property type="evidence" value="ECO:0007669"/>
    <property type="project" value="InterPro"/>
</dbReference>
<dbReference type="GO" id="GO:0006412">
    <property type="term" value="P:translation"/>
    <property type="evidence" value="ECO:0007669"/>
    <property type="project" value="UniProtKB-UniRule"/>
</dbReference>
<dbReference type="Gene3D" id="1.10.20.60">
    <property type="entry name" value="Glu-tRNAGln amidotransferase C subunit, N-terminal domain"/>
    <property type="match status" value="1"/>
</dbReference>
<dbReference type="HAMAP" id="MF_00122">
    <property type="entry name" value="GatC"/>
    <property type="match status" value="1"/>
</dbReference>
<dbReference type="InterPro" id="IPR036113">
    <property type="entry name" value="Asp/Glu-ADT_sf_sub_c"/>
</dbReference>
<dbReference type="InterPro" id="IPR003837">
    <property type="entry name" value="GatC"/>
</dbReference>
<dbReference type="NCBIfam" id="TIGR00135">
    <property type="entry name" value="gatC"/>
    <property type="match status" value="1"/>
</dbReference>
<dbReference type="PANTHER" id="PTHR15004">
    <property type="entry name" value="GLUTAMYL-TRNA(GLN) AMIDOTRANSFERASE SUBUNIT C, MITOCHONDRIAL"/>
    <property type="match status" value="1"/>
</dbReference>
<dbReference type="PANTHER" id="PTHR15004:SF0">
    <property type="entry name" value="GLUTAMYL-TRNA(GLN) AMIDOTRANSFERASE SUBUNIT C, MITOCHONDRIAL"/>
    <property type="match status" value="1"/>
</dbReference>
<dbReference type="Pfam" id="PF02686">
    <property type="entry name" value="GatC"/>
    <property type="match status" value="1"/>
</dbReference>
<dbReference type="SUPFAM" id="SSF141000">
    <property type="entry name" value="Glu-tRNAGln amidotransferase C subunit"/>
    <property type="match status" value="1"/>
</dbReference>
<gene>
    <name evidence="1" type="primary">gatC</name>
    <name type="ordered locus">SRU_1282</name>
</gene>
<sequence length="95" mass="10762">MSVTRDDVRHVAQLARLDFSEEEEARMAEELSEILGYVEKLDELDTAGVPPMSHVLDVTNVFRSDEIEERIDRGQALEPAPDADNEHFLVPQVVE</sequence>
<keyword id="KW-0067">ATP-binding</keyword>
<keyword id="KW-0436">Ligase</keyword>
<keyword id="KW-0547">Nucleotide-binding</keyword>
<keyword id="KW-0648">Protein biosynthesis</keyword>
<keyword id="KW-1185">Reference proteome</keyword>